<dbReference type="EC" id="4.2.1.96"/>
<dbReference type="EMBL" id="CK326948">
    <property type="status" value="NOT_ANNOTATED_CDS"/>
    <property type="molecule type" value="mRNA"/>
</dbReference>
<dbReference type="SMR" id="P0C8L6"/>
<dbReference type="OrthoDB" id="277398at2759"/>
<dbReference type="GO" id="GO:0008124">
    <property type="term" value="F:4-alpha-hydroxytetrahydrobiopterin dehydratase activity"/>
    <property type="evidence" value="ECO:0007669"/>
    <property type="project" value="UniProtKB-EC"/>
</dbReference>
<dbReference type="GO" id="GO:0006729">
    <property type="term" value="P:tetrahydrobiopterin biosynthetic process"/>
    <property type="evidence" value="ECO:0007669"/>
    <property type="project" value="UniProtKB-KW"/>
</dbReference>
<dbReference type="CDD" id="cd00914">
    <property type="entry name" value="PCD_DCoH_subfamily_b"/>
    <property type="match status" value="1"/>
</dbReference>
<dbReference type="FunFam" id="3.30.1360.20:FF:000001">
    <property type="entry name" value="Pterin-4-alpha-carbinolamine dehydratase 2"/>
    <property type="match status" value="1"/>
</dbReference>
<dbReference type="Gene3D" id="3.30.1360.20">
    <property type="entry name" value="Transcriptional coactivator/pterin dehydratase"/>
    <property type="match status" value="1"/>
</dbReference>
<dbReference type="HAMAP" id="MF_00434">
    <property type="entry name" value="Pterin_4_alpha"/>
    <property type="match status" value="1"/>
</dbReference>
<dbReference type="InterPro" id="IPR036428">
    <property type="entry name" value="PCD_sf"/>
</dbReference>
<dbReference type="InterPro" id="IPR001533">
    <property type="entry name" value="Pterin_deHydtase"/>
</dbReference>
<dbReference type="NCBIfam" id="NF002018">
    <property type="entry name" value="PRK00823.1-3"/>
    <property type="match status" value="1"/>
</dbReference>
<dbReference type="NCBIfam" id="NF002020">
    <property type="entry name" value="PRK00823.1-5"/>
    <property type="match status" value="1"/>
</dbReference>
<dbReference type="PANTHER" id="PTHR12599">
    <property type="entry name" value="PTERIN-4-ALPHA-CARBINOLAMINE DEHYDRATASE"/>
    <property type="match status" value="1"/>
</dbReference>
<dbReference type="PANTHER" id="PTHR12599:SF0">
    <property type="entry name" value="PTERIN-4-ALPHA-CARBINOLAMINE DEHYDRATASE"/>
    <property type="match status" value="1"/>
</dbReference>
<dbReference type="Pfam" id="PF01329">
    <property type="entry name" value="Pterin_4a"/>
    <property type="match status" value="1"/>
</dbReference>
<dbReference type="SUPFAM" id="SSF55248">
    <property type="entry name" value="PCD-like"/>
    <property type="match status" value="1"/>
</dbReference>
<evidence type="ECO:0000250" key="1"/>
<evidence type="ECO:0000303" key="2">
    <source ref="1"/>
</evidence>
<evidence type="ECO:0000305" key="3"/>
<sequence>MDPRLTHEDRILHLAPLTEKGWLLVEGRDAIHKEFKFKDFNAAFGFMTRVALLAEKMDHHPEWFNVYNKVQITLSSHDVAGLSQRDIKLASFIEKAAVGASTS</sequence>
<keyword id="KW-0456">Lyase</keyword>
<keyword id="KW-0783">Tetrahydrobiopterin biosynthesis</keyword>
<gene>
    <name type="primary">Pcd</name>
</gene>
<reference key="1">
    <citation type="submission" date="2003-12" db="EMBL/GenBank/DDBJ databases">
        <title>A survey of genes expressed in the tardigrade Hypsibius dujardini.</title>
        <authorList>
            <person name="Daub J."/>
            <person name="Thomas F."/>
            <person name="Aboobaker A."/>
            <person name="Blaxter M.L."/>
        </authorList>
    </citation>
    <scope>NUCLEOTIDE SEQUENCE [LARGE SCALE MRNA]</scope>
    <source>
        <strain>Z151</strain>
    </source>
</reference>
<feature type="chain" id="PRO_0000357456" description="Probable pterin-4-alpha-carbinolamine dehydratase">
    <location>
        <begin position="1"/>
        <end position="103"/>
    </location>
</feature>
<comment type="function">
    <text evidence="1">Involved in tetrahydrobiopterin biosynthesis.</text>
</comment>
<comment type="catalytic activity">
    <reaction>
        <text>(4aS,6R)-4a-hydroxy-L-erythro-5,6,7,8-tetrahydrobiopterin = (6R)-L-erythro-6,7-dihydrobiopterin + H2O</text>
        <dbReference type="Rhea" id="RHEA:11920"/>
        <dbReference type="ChEBI" id="CHEBI:15377"/>
        <dbReference type="ChEBI" id="CHEBI:15642"/>
        <dbReference type="ChEBI" id="CHEBI:43120"/>
        <dbReference type="EC" id="4.2.1.96"/>
    </reaction>
</comment>
<comment type="similarity">
    <text evidence="3">Belongs to the pterin-4-alpha-carbinolamine dehydratase family.</text>
</comment>
<accession>P0C8L6</accession>
<organism evidence="2">
    <name type="scientific">Hypsibius exemplaris</name>
    <name type="common">Freshwater tardigrade</name>
    <dbReference type="NCBI Taxonomy" id="2072580"/>
    <lineage>
        <taxon>Eukaryota</taxon>
        <taxon>Metazoa</taxon>
        <taxon>Ecdysozoa</taxon>
        <taxon>Tardigrada</taxon>
        <taxon>Eutardigrada</taxon>
        <taxon>Parachela</taxon>
        <taxon>Hypsibioidea</taxon>
        <taxon>Hypsibiidae</taxon>
        <taxon>Hypsibius</taxon>
    </lineage>
</organism>
<proteinExistence type="inferred from homology"/>
<name>PHS_HYPEX</name>
<protein>
    <recommendedName>
        <fullName>Probable pterin-4-alpha-carbinolamine dehydratase</fullName>
        <shortName>PHS</shortName>
        <ecNumber>4.2.1.96</ecNumber>
    </recommendedName>
    <alternativeName>
        <fullName>4-alpha-hydroxy-tetrahydropterin dehydratase</fullName>
    </alternativeName>
    <alternativeName>
        <fullName>Pterin carbinolamine dehydratase</fullName>
        <shortName>PCD</shortName>
    </alternativeName>
</protein>